<keyword id="KW-0149">Chlorophyll biosynthesis</keyword>
<keyword id="KW-0521">NADP</keyword>
<keyword id="KW-0560">Oxidoreductase</keyword>
<keyword id="KW-0627">Porphyrin biosynthesis</keyword>
<organism>
    <name type="scientific">Parasynechococcus marenigrum (strain WH8102)</name>
    <dbReference type="NCBI Taxonomy" id="84588"/>
    <lineage>
        <taxon>Bacteria</taxon>
        <taxon>Bacillati</taxon>
        <taxon>Cyanobacteriota</taxon>
        <taxon>Cyanophyceae</taxon>
        <taxon>Synechococcales</taxon>
        <taxon>Prochlorococcaceae</taxon>
        <taxon>Parasynechococcus</taxon>
        <taxon>Parasynechococcus marenigrum</taxon>
    </lineage>
</organism>
<reference key="1">
    <citation type="journal article" date="2003" name="Nature">
        <title>The genome of a motile marine Synechococcus.</title>
        <authorList>
            <person name="Palenik B."/>
            <person name="Brahamsha B."/>
            <person name="Larimer F.W."/>
            <person name="Land M.L."/>
            <person name="Hauser L."/>
            <person name="Chain P."/>
            <person name="Lamerdin J.E."/>
            <person name="Regala W."/>
            <person name="Allen E.E."/>
            <person name="McCarren J."/>
            <person name="Paulsen I.T."/>
            <person name="Dufresne A."/>
            <person name="Partensky F."/>
            <person name="Webb E.A."/>
            <person name="Waterbury J."/>
        </authorList>
    </citation>
    <scope>NUCLEOTIDE SEQUENCE [LARGE SCALE GENOMIC DNA]</scope>
    <source>
        <strain>WH8102</strain>
    </source>
</reference>
<accession>Q7U769</accession>
<name>HEM1_PARMW</name>
<gene>
    <name evidence="1" type="primary">hemA</name>
    <name type="ordered locus">SYNW1117</name>
</gene>
<feature type="chain" id="PRO_0000114078" description="Glutamyl-tRNA reductase">
    <location>
        <begin position="1"/>
        <end position="432"/>
    </location>
</feature>
<feature type="active site" description="Nucleophile" evidence="1">
    <location>
        <position position="50"/>
    </location>
</feature>
<feature type="binding site" evidence="1">
    <location>
        <begin position="49"/>
        <end position="52"/>
    </location>
    <ligand>
        <name>substrate</name>
    </ligand>
</feature>
<feature type="binding site" evidence="1">
    <location>
        <position position="109"/>
    </location>
    <ligand>
        <name>substrate</name>
    </ligand>
</feature>
<feature type="binding site" evidence="1">
    <location>
        <begin position="114"/>
        <end position="116"/>
    </location>
    <ligand>
        <name>substrate</name>
    </ligand>
</feature>
<feature type="binding site" evidence="1">
    <location>
        <position position="120"/>
    </location>
    <ligand>
        <name>substrate</name>
    </ligand>
</feature>
<feature type="binding site" evidence="1">
    <location>
        <begin position="198"/>
        <end position="203"/>
    </location>
    <ligand>
        <name>NADP(+)</name>
        <dbReference type="ChEBI" id="CHEBI:58349"/>
    </ligand>
</feature>
<feature type="site" description="Important for activity" evidence="1">
    <location>
        <position position="99"/>
    </location>
</feature>
<sequence length="432" mass="47454">MHIAVVGLSHRTAPVEIRERLSIPEQTMETSLQSLRGHEQVLEASILSTCNRLEIYTLVRHPDLGVSAVSEFLSGHSGLATGELTPHLFNYHHEDAVDHLMRVAAGLDSLVLGEGQILSQVKKMMRLGQEHKSLGPILNRLLTQAVSTGKRVRSETNLGTGAVSISSAAVELAQLKLGQSRGLDQLVTLESEQIAVVGAGRMSRLLLQHLQAKGASGVVLLNRTVQRAELLAADFPDLPVQCRPLTDLDQCLSTCSLVFTSTAADDPIIDAARLEPLNRRSKLRLIDIGVPRNIAADAAAVDGVESHDVDDLQEVVARNQEARQAMAREAEQLLQQEAQQFLEWWDSLEAVPTINRLRSSMETIRVEELQKALSRMGPDFSARERKVVEALSKGIINKILHTPVTSLRAPQGRQERQQALRTVERLFSLGDD</sequence>
<proteinExistence type="inferred from homology"/>
<protein>
    <recommendedName>
        <fullName evidence="1">Glutamyl-tRNA reductase</fullName>
        <shortName evidence="1">GluTR</shortName>
        <ecNumber evidence="1">1.2.1.70</ecNumber>
    </recommendedName>
</protein>
<dbReference type="EC" id="1.2.1.70" evidence="1"/>
<dbReference type="EMBL" id="BX569692">
    <property type="protein sequence ID" value="CAE07632.1"/>
    <property type="molecule type" value="Genomic_DNA"/>
</dbReference>
<dbReference type="RefSeq" id="WP_011127982.1">
    <property type="nucleotide sequence ID" value="NC_005070.1"/>
</dbReference>
<dbReference type="SMR" id="Q7U769"/>
<dbReference type="STRING" id="84588.SYNW1117"/>
<dbReference type="KEGG" id="syw:SYNW1117"/>
<dbReference type="eggNOG" id="COG0373">
    <property type="taxonomic scope" value="Bacteria"/>
</dbReference>
<dbReference type="HOGENOM" id="CLU_035113_2_1_3"/>
<dbReference type="UniPathway" id="UPA00251">
    <property type="reaction ID" value="UER00316"/>
</dbReference>
<dbReference type="UniPathway" id="UPA00668"/>
<dbReference type="Proteomes" id="UP000001422">
    <property type="component" value="Chromosome"/>
</dbReference>
<dbReference type="GO" id="GO:0008883">
    <property type="term" value="F:glutamyl-tRNA reductase activity"/>
    <property type="evidence" value="ECO:0007669"/>
    <property type="project" value="UniProtKB-UniRule"/>
</dbReference>
<dbReference type="GO" id="GO:0050661">
    <property type="term" value="F:NADP binding"/>
    <property type="evidence" value="ECO:0007669"/>
    <property type="project" value="InterPro"/>
</dbReference>
<dbReference type="GO" id="GO:0015995">
    <property type="term" value="P:chlorophyll biosynthetic process"/>
    <property type="evidence" value="ECO:0007669"/>
    <property type="project" value="UniProtKB-UniRule"/>
</dbReference>
<dbReference type="GO" id="GO:0006782">
    <property type="term" value="P:protoporphyrinogen IX biosynthetic process"/>
    <property type="evidence" value="ECO:0007669"/>
    <property type="project" value="UniProtKB-UniRule"/>
</dbReference>
<dbReference type="CDD" id="cd05213">
    <property type="entry name" value="NAD_bind_Glutamyl_tRNA_reduct"/>
    <property type="match status" value="1"/>
</dbReference>
<dbReference type="FunFam" id="3.30.460.30:FF:000001">
    <property type="entry name" value="Glutamyl-tRNA reductase"/>
    <property type="match status" value="1"/>
</dbReference>
<dbReference type="Gene3D" id="3.30.460.30">
    <property type="entry name" value="Glutamyl-tRNA reductase, N-terminal domain"/>
    <property type="match status" value="1"/>
</dbReference>
<dbReference type="Gene3D" id="3.40.50.720">
    <property type="entry name" value="NAD(P)-binding Rossmann-like Domain"/>
    <property type="match status" value="1"/>
</dbReference>
<dbReference type="HAMAP" id="MF_00087">
    <property type="entry name" value="Glu_tRNA_reductase"/>
    <property type="match status" value="1"/>
</dbReference>
<dbReference type="InterPro" id="IPR000343">
    <property type="entry name" value="4pyrrol_synth_GluRdtase"/>
</dbReference>
<dbReference type="InterPro" id="IPR015896">
    <property type="entry name" value="4pyrrol_synth_GluRdtase_dimer"/>
</dbReference>
<dbReference type="InterPro" id="IPR015895">
    <property type="entry name" value="4pyrrol_synth_GluRdtase_N"/>
</dbReference>
<dbReference type="InterPro" id="IPR018214">
    <property type="entry name" value="GluRdtase_CS"/>
</dbReference>
<dbReference type="InterPro" id="IPR036453">
    <property type="entry name" value="GluRdtase_dimer_dom_sf"/>
</dbReference>
<dbReference type="InterPro" id="IPR036343">
    <property type="entry name" value="GluRdtase_N_sf"/>
</dbReference>
<dbReference type="InterPro" id="IPR036291">
    <property type="entry name" value="NAD(P)-bd_dom_sf"/>
</dbReference>
<dbReference type="InterPro" id="IPR006151">
    <property type="entry name" value="Shikm_DH/Glu-tRNA_Rdtase"/>
</dbReference>
<dbReference type="NCBIfam" id="TIGR01035">
    <property type="entry name" value="hemA"/>
    <property type="match status" value="1"/>
</dbReference>
<dbReference type="NCBIfam" id="NF000744">
    <property type="entry name" value="PRK00045.1-3"/>
    <property type="match status" value="1"/>
</dbReference>
<dbReference type="PANTHER" id="PTHR43120">
    <property type="entry name" value="GLUTAMYL-TRNA REDUCTASE 1, CHLOROPLASTIC"/>
    <property type="match status" value="1"/>
</dbReference>
<dbReference type="PANTHER" id="PTHR43120:SF1">
    <property type="entry name" value="GLUTAMYL-TRNA REDUCTASE 1, CHLOROPLASTIC"/>
    <property type="match status" value="1"/>
</dbReference>
<dbReference type="Pfam" id="PF00745">
    <property type="entry name" value="GlutR_dimer"/>
    <property type="match status" value="1"/>
</dbReference>
<dbReference type="Pfam" id="PF05201">
    <property type="entry name" value="GlutR_N"/>
    <property type="match status" value="1"/>
</dbReference>
<dbReference type="Pfam" id="PF01488">
    <property type="entry name" value="Shikimate_DH"/>
    <property type="match status" value="1"/>
</dbReference>
<dbReference type="PIRSF" id="PIRSF000445">
    <property type="entry name" value="4pyrrol_synth_GluRdtase"/>
    <property type="match status" value="1"/>
</dbReference>
<dbReference type="SUPFAM" id="SSF69742">
    <property type="entry name" value="Glutamyl tRNA-reductase catalytic, N-terminal domain"/>
    <property type="match status" value="1"/>
</dbReference>
<dbReference type="SUPFAM" id="SSF69075">
    <property type="entry name" value="Glutamyl tRNA-reductase dimerization domain"/>
    <property type="match status" value="1"/>
</dbReference>
<dbReference type="SUPFAM" id="SSF51735">
    <property type="entry name" value="NAD(P)-binding Rossmann-fold domains"/>
    <property type="match status" value="1"/>
</dbReference>
<dbReference type="PROSITE" id="PS00747">
    <property type="entry name" value="GLUTR"/>
    <property type="match status" value="1"/>
</dbReference>
<comment type="function">
    <text evidence="1">Catalyzes the NADPH-dependent reduction of glutamyl-tRNA(Glu) to glutamate 1-semialdehyde (GSA).</text>
</comment>
<comment type="catalytic activity">
    <reaction evidence="1">
        <text>(S)-4-amino-5-oxopentanoate + tRNA(Glu) + NADP(+) = L-glutamyl-tRNA(Glu) + NADPH + H(+)</text>
        <dbReference type="Rhea" id="RHEA:12344"/>
        <dbReference type="Rhea" id="RHEA-COMP:9663"/>
        <dbReference type="Rhea" id="RHEA-COMP:9680"/>
        <dbReference type="ChEBI" id="CHEBI:15378"/>
        <dbReference type="ChEBI" id="CHEBI:57501"/>
        <dbReference type="ChEBI" id="CHEBI:57783"/>
        <dbReference type="ChEBI" id="CHEBI:58349"/>
        <dbReference type="ChEBI" id="CHEBI:78442"/>
        <dbReference type="ChEBI" id="CHEBI:78520"/>
        <dbReference type="EC" id="1.2.1.70"/>
    </reaction>
</comment>
<comment type="pathway">
    <text evidence="1">Porphyrin-containing compound metabolism; protoporphyrin-IX biosynthesis; 5-aminolevulinate from L-glutamyl-tRNA(Glu): step 1/2.</text>
</comment>
<comment type="pathway">
    <text evidence="1">Porphyrin-containing compound metabolism; chlorophyll biosynthesis.</text>
</comment>
<comment type="subunit">
    <text evidence="1">Homodimer.</text>
</comment>
<comment type="domain">
    <text evidence="1">Possesses an unusual extended V-shaped dimeric structure with each monomer consisting of three distinct domains arranged along a curved 'spinal' alpha-helix. The N-terminal catalytic domain specifically recognizes the glutamate moiety of the substrate. The second domain is the NADPH-binding domain, and the third C-terminal domain is responsible for dimerization.</text>
</comment>
<comment type="miscellaneous">
    <text evidence="1">During catalysis, the active site Cys acts as a nucleophile attacking the alpha-carbonyl group of tRNA-bound glutamate with the formation of a thioester intermediate between enzyme and glutamate, and the concomitant release of tRNA(Glu). The thioester intermediate is finally reduced by direct hydride transfer from NADPH, to form the product GSA.</text>
</comment>
<comment type="similarity">
    <text evidence="1">Belongs to the glutamyl-tRNA reductase family.</text>
</comment>
<evidence type="ECO:0000255" key="1">
    <source>
        <dbReference type="HAMAP-Rule" id="MF_00087"/>
    </source>
</evidence>